<reference key="1">
    <citation type="journal article" date="2007" name="PLoS Genet.">
        <title>Patterns and implications of gene gain and loss in the evolution of Prochlorococcus.</title>
        <authorList>
            <person name="Kettler G.C."/>
            <person name="Martiny A.C."/>
            <person name="Huang K."/>
            <person name="Zucker J."/>
            <person name="Coleman M.L."/>
            <person name="Rodrigue S."/>
            <person name="Chen F."/>
            <person name="Lapidus A."/>
            <person name="Ferriera S."/>
            <person name="Johnson J."/>
            <person name="Steglich C."/>
            <person name="Church G.M."/>
            <person name="Richardson P."/>
            <person name="Chisholm S.W."/>
        </authorList>
    </citation>
    <scope>NUCLEOTIDE SEQUENCE [LARGE SCALE GENOMIC DNA]</scope>
    <source>
        <strain>NATL2A</strain>
    </source>
</reference>
<name>BIOB_PROMT</name>
<comment type="function">
    <text evidence="1">Catalyzes the conversion of dethiobiotin (DTB) to biotin by the insertion of a sulfur atom into dethiobiotin via a radical-based mechanism.</text>
</comment>
<comment type="catalytic activity">
    <reaction evidence="1">
        <text>(4R,5S)-dethiobiotin + (sulfur carrier)-SH + 2 reduced [2Fe-2S]-[ferredoxin] + 2 S-adenosyl-L-methionine = (sulfur carrier)-H + biotin + 2 5'-deoxyadenosine + 2 L-methionine + 2 oxidized [2Fe-2S]-[ferredoxin]</text>
        <dbReference type="Rhea" id="RHEA:22060"/>
        <dbReference type="Rhea" id="RHEA-COMP:10000"/>
        <dbReference type="Rhea" id="RHEA-COMP:10001"/>
        <dbReference type="Rhea" id="RHEA-COMP:14737"/>
        <dbReference type="Rhea" id="RHEA-COMP:14739"/>
        <dbReference type="ChEBI" id="CHEBI:17319"/>
        <dbReference type="ChEBI" id="CHEBI:29917"/>
        <dbReference type="ChEBI" id="CHEBI:33737"/>
        <dbReference type="ChEBI" id="CHEBI:33738"/>
        <dbReference type="ChEBI" id="CHEBI:57586"/>
        <dbReference type="ChEBI" id="CHEBI:57844"/>
        <dbReference type="ChEBI" id="CHEBI:59789"/>
        <dbReference type="ChEBI" id="CHEBI:64428"/>
        <dbReference type="ChEBI" id="CHEBI:149473"/>
        <dbReference type="EC" id="2.8.1.6"/>
    </reaction>
</comment>
<comment type="cofactor">
    <cofactor evidence="1">
        <name>[4Fe-4S] cluster</name>
        <dbReference type="ChEBI" id="CHEBI:49883"/>
    </cofactor>
    <text evidence="1">Binds 1 [4Fe-4S] cluster. The cluster is coordinated with 3 cysteines and an exchangeable S-adenosyl-L-methionine.</text>
</comment>
<comment type="cofactor">
    <cofactor evidence="1">
        <name>[2Fe-2S] cluster</name>
        <dbReference type="ChEBI" id="CHEBI:190135"/>
    </cofactor>
    <text evidence="1">Binds 1 [2Fe-2S] cluster. The cluster is coordinated with 3 cysteines and 1 arginine.</text>
</comment>
<comment type="pathway">
    <text evidence="1">Cofactor biosynthesis; biotin biosynthesis; biotin from 7,8-diaminononanoate: step 2/2.</text>
</comment>
<comment type="subunit">
    <text evidence="1">Homodimer.</text>
</comment>
<comment type="similarity">
    <text evidence="1">Belongs to the radical SAM superfamily. Biotin synthase family.</text>
</comment>
<organism>
    <name type="scientific">Prochlorococcus marinus (strain NATL2A)</name>
    <dbReference type="NCBI Taxonomy" id="59920"/>
    <lineage>
        <taxon>Bacteria</taxon>
        <taxon>Bacillati</taxon>
        <taxon>Cyanobacteriota</taxon>
        <taxon>Cyanophyceae</taxon>
        <taxon>Synechococcales</taxon>
        <taxon>Prochlorococcaceae</taxon>
        <taxon>Prochlorococcus</taxon>
    </lineage>
</organism>
<gene>
    <name evidence="1" type="primary">bioB</name>
    <name type="ordered locus">PMN2A_0655</name>
</gene>
<evidence type="ECO:0000255" key="1">
    <source>
        <dbReference type="HAMAP-Rule" id="MF_01694"/>
    </source>
</evidence>
<evidence type="ECO:0000255" key="2">
    <source>
        <dbReference type="PROSITE-ProRule" id="PRU01266"/>
    </source>
</evidence>
<keyword id="KW-0001">2Fe-2S</keyword>
<keyword id="KW-0004">4Fe-4S</keyword>
<keyword id="KW-0093">Biotin biosynthesis</keyword>
<keyword id="KW-0408">Iron</keyword>
<keyword id="KW-0411">Iron-sulfur</keyword>
<keyword id="KW-0479">Metal-binding</keyword>
<keyword id="KW-1185">Reference proteome</keyword>
<keyword id="KW-0949">S-adenosyl-L-methionine</keyword>
<keyword id="KW-0808">Transferase</keyword>
<dbReference type="EC" id="2.8.1.6" evidence="1"/>
<dbReference type="EMBL" id="CP000095">
    <property type="protein sequence ID" value="AAZ58146.1"/>
    <property type="molecule type" value="Genomic_DNA"/>
</dbReference>
<dbReference type="RefSeq" id="WP_011294744.1">
    <property type="nucleotide sequence ID" value="NC_007335.2"/>
</dbReference>
<dbReference type="SMR" id="Q46K32"/>
<dbReference type="STRING" id="59920.PMN2A_0655"/>
<dbReference type="KEGG" id="pmn:PMN2A_0655"/>
<dbReference type="HOGENOM" id="CLU_033172_1_2_3"/>
<dbReference type="OrthoDB" id="9786826at2"/>
<dbReference type="PhylomeDB" id="Q46K32"/>
<dbReference type="UniPathway" id="UPA00078">
    <property type="reaction ID" value="UER00162"/>
</dbReference>
<dbReference type="Proteomes" id="UP000002535">
    <property type="component" value="Chromosome"/>
</dbReference>
<dbReference type="GO" id="GO:0051537">
    <property type="term" value="F:2 iron, 2 sulfur cluster binding"/>
    <property type="evidence" value="ECO:0007669"/>
    <property type="project" value="UniProtKB-KW"/>
</dbReference>
<dbReference type="GO" id="GO:0051539">
    <property type="term" value="F:4 iron, 4 sulfur cluster binding"/>
    <property type="evidence" value="ECO:0007669"/>
    <property type="project" value="UniProtKB-KW"/>
</dbReference>
<dbReference type="GO" id="GO:0004076">
    <property type="term" value="F:biotin synthase activity"/>
    <property type="evidence" value="ECO:0007669"/>
    <property type="project" value="UniProtKB-UniRule"/>
</dbReference>
<dbReference type="GO" id="GO:0005506">
    <property type="term" value="F:iron ion binding"/>
    <property type="evidence" value="ECO:0007669"/>
    <property type="project" value="UniProtKB-UniRule"/>
</dbReference>
<dbReference type="GO" id="GO:0009102">
    <property type="term" value="P:biotin biosynthetic process"/>
    <property type="evidence" value="ECO:0007669"/>
    <property type="project" value="UniProtKB-UniRule"/>
</dbReference>
<dbReference type="CDD" id="cd01335">
    <property type="entry name" value="Radical_SAM"/>
    <property type="match status" value="1"/>
</dbReference>
<dbReference type="Gene3D" id="3.20.20.70">
    <property type="entry name" value="Aldolase class I"/>
    <property type="match status" value="1"/>
</dbReference>
<dbReference type="HAMAP" id="MF_01694">
    <property type="entry name" value="BioB"/>
    <property type="match status" value="1"/>
</dbReference>
<dbReference type="InterPro" id="IPR013785">
    <property type="entry name" value="Aldolase_TIM"/>
</dbReference>
<dbReference type="InterPro" id="IPR010722">
    <property type="entry name" value="BATS_dom"/>
</dbReference>
<dbReference type="InterPro" id="IPR002684">
    <property type="entry name" value="Biotin_synth/BioAB"/>
</dbReference>
<dbReference type="InterPro" id="IPR024177">
    <property type="entry name" value="Biotin_synthase"/>
</dbReference>
<dbReference type="InterPro" id="IPR006638">
    <property type="entry name" value="Elp3/MiaA/NifB-like_rSAM"/>
</dbReference>
<dbReference type="InterPro" id="IPR007197">
    <property type="entry name" value="rSAM"/>
</dbReference>
<dbReference type="NCBIfam" id="TIGR00433">
    <property type="entry name" value="bioB"/>
    <property type="match status" value="1"/>
</dbReference>
<dbReference type="PANTHER" id="PTHR22976">
    <property type="entry name" value="BIOTIN SYNTHASE"/>
    <property type="match status" value="1"/>
</dbReference>
<dbReference type="PANTHER" id="PTHR22976:SF2">
    <property type="entry name" value="BIOTIN SYNTHASE, MITOCHONDRIAL"/>
    <property type="match status" value="1"/>
</dbReference>
<dbReference type="Pfam" id="PF06968">
    <property type="entry name" value="BATS"/>
    <property type="match status" value="1"/>
</dbReference>
<dbReference type="Pfam" id="PF04055">
    <property type="entry name" value="Radical_SAM"/>
    <property type="match status" value="1"/>
</dbReference>
<dbReference type="PIRSF" id="PIRSF001619">
    <property type="entry name" value="Biotin_synth"/>
    <property type="match status" value="1"/>
</dbReference>
<dbReference type="SFLD" id="SFLDF00272">
    <property type="entry name" value="biotin_synthase"/>
    <property type="match status" value="1"/>
</dbReference>
<dbReference type="SFLD" id="SFLDG01278">
    <property type="entry name" value="biotin_synthase_like"/>
    <property type="match status" value="1"/>
</dbReference>
<dbReference type="SMART" id="SM00876">
    <property type="entry name" value="BATS"/>
    <property type="match status" value="1"/>
</dbReference>
<dbReference type="SMART" id="SM00729">
    <property type="entry name" value="Elp3"/>
    <property type="match status" value="1"/>
</dbReference>
<dbReference type="SUPFAM" id="SSF102114">
    <property type="entry name" value="Radical SAM enzymes"/>
    <property type="match status" value="1"/>
</dbReference>
<dbReference type="PROSITE" id="PS51918">
    <property type="entry name" value="RADICAL_SAM"/>
    <property type="match status" value="1"/>
</dbReference>
<proteinExistence type="inferred from homology"/>
<sequence length="345" mass="37938">MTLINPNIQESNKLKFKDESYLDFNSIKGGDIRHDWSSEEIKEILDLPLMDLLWRAQIVHRSYNPGYKVQLASLLSVKTGGCSEDCAYCPQSVHNETTVQPNPVIEVESVLDRARAAKDAGADRFCMGWAWREIKDGNAFDSMLEMVKGVRELGLEACVTAGMITDSQASRLAEAGLTAYNHNLDTSPEHYSKIISTRTYQDRLETLRRVRMAGITVCCGGIIGMGESVSDRASLLKVLATLDPHPESVPINALVAVEGTPMEDLSSIDPLEMVRMVATARIIMPKSRIRLSAGRQQLGREAQILCLQSGADSIFYGDTLLTTSNPEVEADRKLLADAGITANFS</sequence>
<accession>Q46K32</accession>
<feature type="chain" id="PRO_0000381548" description="Biotin synthase">
    <location>
        <begin position="1"/>
        <end position="345"/>
    </location>
</feature>
<feature type="domain" description="Radical SAM core" evidence="2">
    <location>
        <begin position="67"/>
        <end position="295"/>
    </location>
</feature>
<feature type="binding site" evidence="1">
    <location>
        <position position="82"/>
    </location>
    <ligand>
        <name>[4Fe-4S] cluster</name>
        <dbReference type="ChEBI" id="CHEBI:49883"/>
        <note>4Fe-4S-S-AdoMet</note>
    </ligand>
</feature>
<feature type="binding site" evidence="1">
    <location>
        <position position="86"/>
    </location>
    <ligand>
        <name>[4Fe-4S] cluster</name>
        <dbReference type="ChEBI" id="CHEBI:49883"/>
        <note>4Fe-4S-S-AdoMet</note>
    </ligand>
</feature>
<feature type="binding site" evidence="1">
    <location>
        <position position="89"/>
    </location>
    <ligand>
        <name>[4Fe-4S] cluster</name>
        <dbReference type="ChEBI" id="CHEBI:49883"/>
        <note>4Fe-4S-S-AdoMet</note>
    </ligand>
</feature>
<feature type="binding site" evidence="1">
    <location>
        <position position="126"/>
    </location>
    <ligand>
        <name>[2Fe-2S] cluster</name>
        <dbReference type="ChEBI" id="CHEBI:190135"/>
    </ligand>
</feature>
<feature type="binding site" evidence="1">
    <location>
        <position position="158"/>
    </location>
    <ligand>
        <name>[2Fe-2S] cluster</name>
        <dbReference type="ChEBI" id="CHEBI:190135"/>
    </ligand>
</feature>
<feature type="binding site" evidence="1">
    <location>
        <position position="218"/>
    </location>
    <ligand>
        <name>[2Fe-2S] cluster</name>
        <dbReference type="ChEBI" id="CHEBI:190135"/>
    </ligand>
</feature>
<feature type="binding site" evidence="1">
    <location>
        <position position="290"/>
    </location>
    <ligand>
        <name>[2Fe-2S] cluster</name>
        <dbReference type="ChEBI" id="CHEBI:190135"/>
    </ligand>
</feature>
<protein>
    <recommendedName>
        <fullName evidence="1">Biotin synthase</fullName>
        <ecNumber evidence="1">2.8.1.6</ecNumber>
    </recommendedName>
</protein>